<sequence length="810" mass="91333">MNSEIKSLPLLPLRGILVFPYMVIHLDVGREKSIQAIEEAMVQDRMIFLATQREAQTDEPTVDDIYNIGTVAEVKQLLKLPGGTIRVLVEGIARAKIEKYEHQDPYFRVEVQQYSEEFEKGAEVEALMRSLVYQFEQYVKLSKRIPPETVVSVVNLEEPGRLADIIASHLALKIEDKQNVLESVEIVDRLEKLCGIVAKELEIVELERKINIRVRKQMEKTQKEYYLREQMKAIQKELGEKDERVAECEEFREKISKAKFPKEAEEKALKEVERLEKMPPMAAEAAVVRNYLDWMLSLPWSKSTKDRIDINAAEEVLEADHYGLKDPKERITEYLAIRKLAKKMKGPILCLVGPPGVGKTSLGRSVARALDRKFVRISLGGVRDEAEIRGHRRTYVGAMPGRVIQGMRTAGSKNPVFLLDEIDKMASDFRGDPSSALLEVLDPEQNSTFSDHYIETPFDLSNVMFITTANNMYSIPRPLLDRMEVIQISGYTEEEKLQIAKRHLMPKQIKDHGLTEEMIQISENTILKVIREYTRESGVRNLERKIASICRKTAKKIVAGQAEKVKVTTQNLEQFLGIPRYRYGVAEQNDEVGTVTGMAWTEVGGDTLVIEVTTYKGTGRMTLTGKLGDVMKESAQAGYSFIRSRAQELGIDQEMFEKWDLHIHIPEGAIPKDGPSAGITMATAMASVLTGRKVRHDIAMTGEITLRGRVLPVGGIKEKVMAAHRAGIKLIILPNDNKKDLEDIPVNIKKQLEFKLVDHIDQVLAIALLEKEVVDTTTVLEPEAAVMDNPHFSAVDSQEVQQQGGTQLPS</sequence>
<proteinExistence type="inferred from homology"/>
<comment type="function">
    <text evidence="1">ATP-dependent serine protease that mediates the selective degradation of mutant and abnormal proteins as well as certain short-lived regulatory proteins. Required for cellular homeostasis and for survival from DNA damage and developmental changes induced by stress. Degrades polypeptides processively to yield small peptide fragments that are 5 to 10 amino acids long. Binds to DNA in a double-stranded, site-specific manner.</text>
</comment>
<comment type="catalytic activity">
    <reaction evidence="1">
        <text>Hydrolysis of proteins in presence of ATP.</text>
        <dbReference type="EC" id="3.4.21.53"/>
    </reaction>
</comment>
<comment type="subunit">
    <text evidence="1">Homohexamer. Organized in a ring with a central cavity.</text>
</comment>
<comment type="subcellular location">
    <subcellularLocation>
        <location evidence="1">Cytoplasm</location>
    </subcellularLocation>
</comment>
<comment type="induction">
    <text evidence="1">By heat shock.</text>
</comment>
<comment type="similarity">
    <text evidence="1">Belongs to the peptidase S16 family.</text>
</comment>
<accession>A4J7L6</accession>
<dbReference type="EC" id="3.4.21.53" evidence="1"/>
<dbReference type="EMBL" id="CP000612">
    <property type="protein sequence ID" value="ABO51069.1"/>
    <property type="molecule type" value="Genomic_DNA"/>
</dbReference>
<dbReference type="RefSeq" id="WP_011878867.1">
    <property type="nucleotide sequence ID" value="NC_009253.1"/>
</dbReference>
<dbReference type="SMR" id="A4J7L6"/>
<dbReference type="STRING" id="349161.Dred_2559"/>
<dbReference type="MEROPS" id="S16.001"/>
<dbReference type="KEGG" id="drm:Dred_2559"/>
<dbReference type="eggNOG" id="COG0466">
    <property type="taxonomic scope" value="Bacteria"/>
</dbReference>
<dbReference type="HOGENOM" id="CLU_004109_4_3_9"/>
<dbReference type="OrthoDB" id="9803599at2"/>
<dbReference type="Proteomes" id="UP000001556">
    <property type="component" value="Chromosome"/>
</dbReference>
<dbReference type="GO" id="GO:0005737">
    <property type="term" value="C:cytoplasm"/>
    <property type="evidence" value="ECO:0007669"/>
    <property type="project" value="UniProtKB-SubCell"/>
</dbReference>
<dbReference type="GO" id="GO:0005524">
    <property type="term" value="F:ATP binding"/>
    <property type="evidence" value="ECO:0007669"/>
    <property type="project" value="UniProtKB-UniRule"/>
</dbReference>
<dbReference type="GO" id="GO:0016887">
    <property type="term" value="F:ATP hydrolysis activity"/>
    <property type="evidence" value="ECO:0007669"/>
    <property type="project" value="UniProtKB-UniRule"/>
</dbReference>
<dbReference type="GO" id="GO:0004176">
    <property type="term" value="F:ATP-dependent peptidase activity"/>
    <property type="evidence" value="ECO:0007669"/>
    <property type="project" value="UniProtKB-UniRule"/>
</dbReference>
<dbReference type="GO" id="GO:0043565">
    <property type="term" value="F:sequence-specific DNA binding"/>
    <property type="evidence" value="ECO:0007669"/>
    <property type="project" value="UniProtKB-UniRule"/>
</dbReference>
<dbReference type="GO" id="GO:0004252">
    <property type="term" value="F:serine-type endopeptidase activity"/>
    <property type="evidence" value="ECO:0007669"/>
    <property type="project" value="UniProtKB-UniRule"/>
</dbReference>
<dbReference type="GO" id="GO:0034605">
    <property type="term" value="P:cellular response to heat"/>
    <property type="evidence" value="ECO:0007669"/>
    <property type="project" value="UniProtKB-UniRule"/>
</dbReference>
<dbReference type="GO" id="GO:0006515">
    <property type="term" value="P:protein quality control for misfolded or incompletely synthesized proteins"/>
    <property type="evidence" value="ECO:0007669"/>
    <property type="project" value="UniProtKB-UniRule"/>
</dbReference>
<dbReference type="CDD" id="cd19500">
    <property type="entry name" value="RecA-like_Lon"/>
    <property type="match status" value="1"/>
</dbReference>
<dbReference type="FunFam" id="1.20.5.5270:FF:000002">
    <property type="entry name" value="Lon protease homolog"/>
    <property type="match status" value="1"/>
</dbReference>
<dbReference type="FunFam" id="3.40.50.300:FF:000382">
    <property type="entry name" value="Lon protease homolog 2, peroxisomal"/>
    <property type="match status" value="1"/>
</dbReference>
<dbReference type="Gene3D" id="1.10.8.60">
    <property type="match status" value="1"/>
</dbReference>
<dbReference type="Gene3D" id="1.20.5.5270">
    <property type="match status" value="1"/>
</dbReference>
<dbReference type="Gene3D" id="1.20.58.1480">
    <property type="match status" value="1"/>
</dbReference>
<dbReference type="Gene3D" id="3.30.230.10">
    <property type="match status" value="1"/>
</dbReference>
<dbReference type="Gene3D" id="2.30.130.40">
    <property type="entry name" value="LON domain-like"/>
    <property type="match status" value="1"/>
</dbReference>
<dbReference type="Gene3D" id="3.40.50.300">
    <property type="entry name" value="P-loop containing nucleotide triphosphate hydrolases"/>
    <property type="match status" value="1"/>
</dbReference>
<dbReference type="HAMAP" id="MF_01973">
    <property type="entry name" value="lon_bact"/>
    <property type="match status" value="1"/>
</dbReference>
<dbReference type="InterPro" id="IPR003593">
    <property type="entry name" value="AAA+_ATPase"/>
</dbReference>
<dbReference type="InterPro" id="IPR003959">
    <property type="entry name" value="ATPase_AAA_core"/>
</dbReference>
<dbReference type="InterPro" id="IPR027543">
    <property type="entry name" value="Lon_bac"/>
</dbReference>
<dbReference type="InterPro" id="IPR004815">
    <property type="entry name" value="Lon_bac/euk-typ"/>
</dbReference>
<dbReference type="InterPro" id="IPR054594">
    <property type="entry name" value="Lon_lid"/>
</dbReference>
<dbReference type="InterPro" id="IPR008269">
    <property type="entry name" value="Lon_proteolytic"/>
</dbReference>
<dbReference type="InterPro" id="IPR027065">
    <property type="entry name" value="Lon_Prtase"/>
</dbReference>
<dbReference type="InterPro" id="IPR003111">
    <property type="entry name" value="Lon_prtase_N"/>
</dbReference>
<dbReference type="InterPro" id="IPR046336">
    <property type="entry name" value="Lon_prtase_N_sf"/>
</dbReference>
<dbReference type="InterPro" id="IPR027417">
    <property type="entry name" value="P-loop_NTPase"/>
</dbReference>
<dbReference type="InterPro" id="IPR008268">
    <property type="entry name" value="Peptidase_S16_AS"/>
</dbReference>
<dbReference type="InterPro" id="IPR015947">
    <property type="entry name" value="PUA-like_sf"/>
</dbReference>
<dbReference type="InterPro" id="IPR020568">
    <property type="entry name" value="Ribosomal_Su5_D2-typ_SF"/>
</dbReference>
<dbReference type="InterPro" id="IPR014721">
    <property type="entry name" value="Ribsml_uS5_D2-typ_fold_subgr"/>
</dbReference>
<dbReference type="NCBIfam" id="TIGR00763">
    <property type="entry name" value="lon"/>
    <property type="match status" value="1"/>
</dbReference>
<dbReference type="NCBIfam" id="NF008053">
    <property type="entry name" value="PRK10787.1"/>
    <property type="match status" value="1"/>
</dbReference>
<dbReference type="PANTHER" id="PTHR10046">
    <property type="entry name" value="ATP DEPENDENT LON PROTEASE FAMILY MEMBER"/>
    <property type="match status" value="1"/>
</dbReference>
<dbReference type="Pfam" id="PF00004">
    <property type="entry name" value="AAA"/>
    <property type="match status" value="1"/>
</dbReference>
<dbReference type="Pfam" id="PF05362">
    <property type="entry name" value="Lon_C"/>
    <property type="match status" value="1"/>
</dbReference>
<dbReference type="Pfam" id="PF22667">
    <property type="entry name" value="Lon_lid"/>
    <property type="match status" value="1"/>
</dbReference>
<dbReference type="Pfam" id="PF02190">
    <property type="entry name" value="LON_substr_bdg"/>
    <property type="match status" value="1"/>
</dbReference>
<dbReference type="PIRSF" id="PIRSF001174">
    <property type="entry name" value="Lon_proteas"/>
    <property type="match status" value="1"/>
</dbReference>
<dbReference type="PRINTS" id="PR00830">
    <property type="entry name" value="ENDOLAPTASE"/>
</dbReference>
<dbReference type="SMART" id="SM00382">
    <property type="entry name" value="AAA"/>
    <property type="match status" value="1"/>
</dbReference>
<dbReference type="SMART" id="SM00464">
    <property type="entry name" value="LON"/>
    <property type="match status" value="1"/>
</dbReference>
<dbReference type="SUPFAM" id="SSF52540">
    <property type="entry name" value="P-loop containing nucleoside triphosphate hydrolases"/>
    <property type="match status" value="1"/>
</dbReference>
<dbReference type="SUPFAM" id="SSF88697">
    <property type="entry name" value="PUA domain-like"/>
    <property type="match status" value="1"/>
</dbReference>
<dbReference type="SUPFAM" id="SSF54211">
    <property type="entry name" value="Ribosomal protein S5 domain 2-like"/>
    <property type="match status" value="1"/>
</dbReference>
<dbReference type="PROSITE" id="PS51787">
    <property type="entry name" value="LON_N"/>
    <property type="match status" value="1"/>
</dbReference>
<dbReference type="PROSITE" id="PS51786">
    <property type="entry name" value="LON_PROTEOLYTIC"/>
    <property type="match status" value="1"/>
</dbReference>
<dbReference type="PROSITE" id="PS01046">
    <property type="entry name" value="LON_SER"/>
    <property type="match status" value="1"/>
</dbReference>
<name>LON_DESRM</name>
<organism>
    <name type="scientific">Desulforamulus reducens (strain ATCC BAA-1160 / DSM 100696 / MI-1)</name>
    <name type="common">Desulfotomaculum reducens</name>
    <dbReference type="NCBI Taxonomy" id="349161"/>
    <lineage>
        <taxon>Bacteria</taxon>
        <taxon>Bacillati</taxon>
        <taxon>Bacillota</taxon>
        <taxon>Clostridia</taxon>
        <taxon>Eubacteriales</taxon>
        <taxon>Peptococcaceae</taxon>
        <taxon>Desulforamulus</taxon>
    </lineage>
</organism>
<gene>
    <name evidence="1" type="primary">lon</name>
    <name type="ordered locus">Dred_2559</name>
</gene>
<protein>
    <recommendedName>
        <fullName evidence="1">Lon protease</fullName>
        <ecNumber evidence="1">3.4.21.53</ecNumber>
    </recommendedName>
    <alternativeName>
        <fullName evidence="1">ATP-dependent protease La</fullName>
    </alternativeName>
</protein>
<keyword id="KW-0067">ATP-binding</keyword>
<keyword id="KW-0963">Cytoplasm</keyword>
<keyword id="KW-0378">Hydrolase</keyword>
<keyword id="KW-0547">Nucleotide-binding</keyword>
<keyword id="KW-0645">Protease</keyword>
<keyword id="KW-1185">Reference proteome</keyword>
<keyword id="KW-0720">Serine protease</keyword>
<keyword id="KW-0346">Stress response</keyword>
<feature type="chain" id="PRO_0000396557" description="Lon protease">
    <location>
        <begin position="1"/>
        <end position="810"/>
    </location>
</feature>
<feature type="domain" description="Lon N-terminal" evidence="3">
    <location>
        <begin position="8"/>
        <end position="201"/>
    </location>
</feature>
<feature type="domain" description="Lon proteolytic" evidence="2">
    <location>
        <begin position="589"/>
        <end position="770"/>
    </location>
</feature>
<feature type="active site" evidence="1">
    <location>
        <position position="676"/>
    </location>
</feature>
<feature type="active site" evidence="1">
    <location>
        <position position="719"/>
    </location>
</feature>
<feature type="binding site" evidence="1">
    <location>
        <begin position="353"/>
        <end position="360"/>
    </location>
    <ligand>
        <name>ATP</name>
        <dbReference type="ChEBI" id="CHEBI:30616"/>
    </ligand>
</feature>
<evidence type="ECO:0000255" key="1">
    <source>
        <dbReference type="HAMAP-Rule" id="MF_01973"/>
    </source>
</evidence>
<evidence type="ECO:0000255" key="2">
    <source>
        <dbReference type="PROSITE-ProRule" id="PRU01122"/>
    </source>
</evidence>
<evidence type="ECO:0000255" key="3">
    <source>
        <dbReference type="PROSITE-ProRule" id="PRU01123"/>
    </source>
</evidence>
<reference key="1">
    <citation type="submission" date="2007-03" db="EMBL/GenBank/DDBJ databases">
        <title>Complete sequence of Desulfotomaculum reducens MI-1.</title>
        <authorList>
            <consortium name="US DOE Joint Genome Institute"/>
            <person name="Copeland A."/>
            <person name="Lucas S."/>
            <person name="Lapidus A."/>
            <person name="Barry K."/>
            <person name="Detter J.C."/>
            <person name="Glavina del Rio T."/>
            <person name="Hammon N."/>
            <person name="Israni S."/>
            <person name="Dalin E."/>
            <person name="Tice H."/>
            <person name="Pitluck S."/>
            <person name="Sims D."/>
            <person name="Brettin T."/>
            <person name="Bruce D."/>
            <person name="Han C."/>
            <person name="Tapia R."/>
            <person name="Schmutz J."/>
            <person name="Larimer F."/>
            <person name="Land M."/>
            <person name="Hauser L."/>
            <person name="Kyrpides N."/>
            <person name="Kim E."/>
            <person name="Tebo B.M."/>
            <person name="Richardson P."/>
        </authorList>
    </citation>
    <scope>NUCLEOTIDE SEQUENCE [LARGE SCALE GENOMIC DNA]</scope>
    <source>
        <strain>ATCC BAA-1160 / DSM 100696 / MI-1</strain>
    </source>
</reference>